<comment type="sequence caution" evidence="5">
    <conflict type="erroneous gene model prediction">
        <sequence resource="EMBL-CDS" id="EDW64164"/>
    </conflict>
</comment>
<organism>
    <name type="scientific">Drosophila virilis</name>
    <name type="common">Fruit fly</name>
    <dbReference type="NCBI Taxonomy" id="7244"/>
    <lineage>
        <taxon>Eukaryota</taxon>
        <taxon>Metazoa</taxon>
        <taxon>Ecdysozoa</taxon>
        <taxon>Arthropoda</taxon>
        <taxon>Hexapoda</taxon>
        <taxon>Insecta</taxon>
        <taxon>Pterygota</taxon>
        <taxon>Neoptera</taxon>
        <taxon>Endopterygota</taxon>
        <taxon>Diptera</taxon>
        <taxon>Brachycera</taxon>
        <taxon>Muscomorpha</taxon>
        <taxon>Ephydroidea</taxon>
        <taxon>Drosophilidae</taxon>
        <taxon>Drosophila</taxon>
    </lineage>
</organism>
<proteinExistence type="predicted"/>
<protein>
    <recommendedName>
        <fullName evidence="4 6">WD repeat-containing protein on Y chromosome</fullName>
        <shortName evidence="4">WD40 Y</shortName>
    </recommendedName>
</protein>
<accession>B7FF08</accession>
<accession>B4LUH8</accession>
<dbReference type="EMBL" id="CH940649">
    <property type="protein sequence ID" value="EDW64164.1"/>
    <property type="status" value="ALT_SEQ"/>
    <property type="molecule type" value="Genomic_DNA"/>
</dbReference>
<dbReference type="EMBL" id="BK006445">
    <property type="protein sequence ID" value="DAA06442.1"/>
    <property type="molecule type" value="Genomic_DNA"/>
</dbReference>
<dbReference type="STRING" id="7244.B7FF08"/>
<dbReference type="GeneID" id="6628104"/>
<dbReference type="KEGG" id="dvi:6628104"/>
<dbReference type="eggNOG" id="KOG0267">
    <property type="taxonomic scope" value="Eukaryota"/>
</dbReference>
<dbReference type="eggNOG" id="KOG3184">
    <property type="taxonomic scope" value="Eukaryota"/>
</dbReference>
<dbReference type="InParanoid" id="B7FF08"/>
<dbReference type="OrthoDB" id="5980302at2759"/>
<dbReference type="ChiTaRS" id="WDY">
    <property type="organism name" value="fly"/>
</dbReference>
<dbReference type="Proteomes" id="UP000008792">
    <property type="component" value="Unassembled WGS sequence"/>
</dbReference>
<dbReference type="Gene3D" id="2.130.10.10">
    <property type="entry name" value="YVTN repeat-like/Quinoprotein amine dehydrogenase"/>
    <property type="match status" value="2"/>
</dbReference>
<dbReference type="InterPro" id="IPR011992">
    <property type="entry name" value="EF-hand-dom_pair"/>
</dbReference>
<dbReference type="InterPro" id="IPR011047">
    <property type="entry name" value="Quinoprotein_ADH-like_sf"/>
</dbReference>
<dbReference type="InterPro" id="IPR051242">
    <property type="entry name" value="WD-EF-hand_domain"/>
</dbReference>
<dbReference type="InterPro" id="IPR015943">
    <property type="entry name" value="WD40/YVTN_repeat-like_dom_sf"/>
</dbReference>
<dbReference type="InterPro" id="IPR036322">
    <property type="entry name" value="WD40_repeat_dom_sf"/>
</dbReference>
<dbReference type="InterPro" id="IPR001680">
    <property type="entry name" value="WD40_rpt"/>
</dbReference>
<dbReference type="PANTHER" id="PTHR44324:SF6">
    <property type="entry name" value="EF-HAND CALCIUM BINDING DOMAIN 8"/>
    <property type="match status" value="1"/>
</dbReference>
<dbReference type="PANTHER" id="PTHR44324">
    <property type="entry name" value="WD40 REPEAT DOMAIN 95"/>
    <property type="match status" value="1"/>
</dbReference>
<dbReference type="Pfam" id="PF00400">
    <property type="entry name" value="WD40"/>
    <property type="match status" value="3"/>
</dbReference>
<dbReference type="SMART" id="SM00320">
    <property type="entry name" value="WD40"/>
    <property type="match status" value="8"/>
</dbReference>
<dbReference type="SUPFAM" id="SSF47473">
    <property type="entry name" value="EF-hand"/>
    <property type="match status" value="1"/>
</dbReference>
<dbReference type="SUPFAM" id="SSF50998">
    <property type="entry name" value="Quinoprotein alcohol dehydrogenase-like"/>
    <property type="match status" value="1"/>
</dbReference>
<dbReference type="SUPFAM" id="SSF50978">
    <property type="entry name" value="WD40 repeat-like"/>
    <property type="match status" value="1"/>
</dbReference>
<dbReference type="PROSITE" id="PS00678">
    <property type="entry name" value="WD_REPEATS_1"/>
    <property type="match status" value="1"/>
</dbReference>
<dbReference type="PROSITE" id="PS50082">
    <property type="entry name" value="WD_REPEATS_2"/>
    <property type="match status" value="4"/>
</dbReference>
<dbReference type="PROSITE" id="PS50294">
    <property type="entry name" value="WD_REPEATS_REGION"/>
    <property type="match status" value="1"/>
</dbReference>
<feature type="chain" id="PRO_0000378998" description="WD repeat-containing protein on Y chromosome">
    <location>
        <begin position="1"/>
        <end position="1182"/>
    </location>
</feature>
<feature type="repeat" description="WD 1" evidence="1">
    <location>
        <begin position="155"/>
        <end position="199"/>
    </location>
</feature>
<feature type="repeat" description="WD 2" evidence="1">
    <location>
        <begin position="323"/>
        <end position="362"/>
    </location>
</feature>
<feature type="repeat" description="WD 3" evidence="1">
    <location>
        <begin position="366"/>
        <end position="405"/>
    </location>
</feature>
<feature type="repeat" description="WD 4" evidence="1">
    <location>
        <begin position="456"/>
        <end position="495"/>
    </location>
</feature>
<feature type="repeat" description="WD 5" evidence="1">
    <location>
        <begin position="508"/>
        <end position="547"/>
    </location>
</feature>
<feature type="repeat" description="WD 6" evidence="1">
    <location>
        <begin position="595"/>
        <end position="635"/>
    </location>
</feature>
<feature type="repeat" description="WD 7" evidence="1">
    <location>
        <begin position="740"/>
        <end position="779"/>
    </location>
</feature>
<feature type="repeat" description="WD 8" evidence="1">
    <location>
        <begin position="823"/>
        <end position="862"/>
    </location>
</feature>
<feature type="region of interest" description="Disordered" evidence="2">
    <location>
        <begin position="1031"/>
        <end position="1182"/>
    </location>
</feature>
<feature type="compositionally biased region" description="Low complexity" evidence="2">
    <location>
        <begin position="1079"/>
        <end position="1092"/>
    </location>
</feature>
<feature type="compositionally biased region" description="Low complexity" evidence="2">
    <location>
        <begin position="1103"/>
        <end position="1121"/>
    </location>
</feature>
<keyword id="KW-1185">Reference proteome</keyword>
<keyword id="KW-0677">Repeat</keyword>
<keyword id="KW-0853">WD repeat</keyword>
<evidence type="ECO:0000255" key="1"/>
<evidence type="ECO:0000256" key="2">
    <source>
        <dbReference type="SAM" id="MobiDB-lite"/>
    </source>
</evidence>
<evidence type="ECO:0000269" key="3">
    <source>
    </source>
</evidence>
<evidence type="ECO:0000303" key="4">
    <source>
    </source>
</evidence>
<evidence type="ECO:0000305" key="5"/>
<evidence type="ECO:0000312" key="6">
    <source>
        <dbReference type="EMBL" id="DAA06442.1"/>
    </source>
</evidence>
<evidence type="ECO:0000312" key="7">
    <source>
        <dbReference type="EMBL" id="EDW64164.1"/>
    </source>
</evidence>
<reference evidence="7" key="1">
    <citation type="journal article" date="2007" name="Nature">
        <title>Evolution of genes and genomes on the Drosophila phylogeny.</title>
        <authorList>
            <consortium name="Drosophila 12 genomes consortium"/>
        </authorList>
    </citation>
    <scope>NUCLEOTIDE SEQUENCE [LARGE SCALE GENOMIC DNA]</scope>
    <source>
        <strain evidence="3">Tucson 15010-1051.87</strain>
    </source>
</reference>
<reference evidence="5 6" key="2">
    <citation type="journal article" date="2008" name="Nature">
        <title>Low conservation of gene content in the Drosophila Y chromosome.</title>
        <authorList>
            <person name="Koerich L.B."/>
            <person name="Wang X."/>
            <person name="Clark A.G."/>
            <person name="Carvalho A.B."/>
        </authorList>
    </citation>
    <scope>IDENTIFICATION</scope>
</reference>
<sequence>MSLVYFASGDSKADIEYQTISSTATQVSQEQSERLHDRISKAQLQKLYELFKSAPGQVVGCGDLRRMLEDVDITFNDFAYTRLFLKINQNHDFMVDWNEFVSYLIFGFQEEDPSSQKEALIMPISMAPVVRKTEHRSAVCCITLLKVKSDQTPMEEITESANYSFGGEDSPENSGMWVTASHEGQLRFWSAHMEPLRSAVSESIYCMSYAFYNNGKTHSKLVLGDYAGNVRILSYSPYLRGPFQAKPGAALVELVWADVLRGRIPLLIPREYINLHNELISCVYFSLHMNTLFASAEYRNTKKYRGRCPGLIMVSNEDRNNFRIPLGVSVFYVSEIKNILVTGGPDTFVRIWDVYISSEPSAILTGHNGGIVAVFVQPEENKVYSVDYHKIIKVWDLQEHTLLQTYGDLVRIIHHSETDIKYYYHSHLRELMVAGRKLIQIKCCPRVRVDLTDGNTHAAPVSVVLYNRLFRNIVTCGLDSYIIVWDPWTGRRKIIMKNCHTKMIYGETIDIEITAACFDPLEQFLLTGARDGSLKIWNYNNAVVVRNMSIQPDQEVTAVIWVVDRILAMGWDRQVTEFNDVEGREYGDPKKWAKFHTDDITCADVKLGEGVVTATYSGEIIFWKLETGQPYRRYNVMDPSRFIELKLNAEEEKLTRRSKRMSSLIGVNRRSTSVQAIKPDEIKDYGANIPVSVQAVLFLQRRPMTKEHGSVFISLDTGIIQVYSHHQHGGYIKQFTAVHKTGDCVLTMATDRKNRFLYTGTAFGYIKVWHIVNYCIPKAEQTYVCMPRLRLEFIFLRKELFLTRAKRMVRFQPEPMLVSSYKGHLKAINSIGFINLPKIIFSGSHDYSCRLWTQGGRYLGTLGTVLPWSKLTPFERAGEDNRAYRLPPDIKKVASSTTLKVISGIQHSFTLKRPKAAEEREEEREVEDTTTDVKNMFERPLREPILGKHFQLPGRSAIEQRIELDTTQLYIPVYTHLRVYPSEMLEALPTSPIISQVKAENYLDHYMPVVGKVDLNTSAINIKEPQKLARTKAGANLDQPRASAGWAKPKTNSILGIPRAGSSLGKARASVSQGSPKAGVSSGYGKVSVSQGYPRAGSPRPCTTSLSKPKTSSSPSKPKGSFRLGSPIAATSPANADSSPGKRKSSPGKRSFSPGKAKASPGKARISSVLGKPKAKTDRETH</sequence>
<gene>
    <name evidence="6" type="primary">WDY</name>
    <name type="ORF">GJ17315</name>
</gene>
<name>WDY_DROVI</name>